<dbReference type="EC" id="6.1.1.7" evidence="1"/>
<dbReference type="EMBL" id="AM260522">
    <property type="protein sequence ID" value="CAJ98973.1"/>
    <property type="molecule type" value="Genomic_DNA"/>
</dbReference>
<dbReference type="RefSeq" id="WP_011577095.1">
    <property type="nucleotide sequence ID" value="NC_008229.1"/>
</dbReference>
<dbReference type="SMR" id="Q17ZF3"/>
<dbReference type="STRING" id="382638.Hac_0121"/>
<dbReference type="GeneID" id="31757653"/>
<dbReference type="KEGG" id="hac:Hac_0121"/>
<dbReference type="eggNOG" id="COG0013">
    <property type="taxonomic scope" value="Bacteria"/>
</dbReference>
<dbReference type="HOGENOM" id="CLU_004485_1_1_7"/>
<dbReference type="OrthoDB" id="9803884at2"/>
<dbReference type="BioCyc" id="HACI382638:HAC_RS00515-MONOMER"/>
<dbReference type="Proteomes" id="UP000000775">
    <property type="component" value="Chromosome"/>
</dbReference>
<dbReference type="GO" id="GO:0005829">
    <property type="term" value="C:cytosol"/>
    <property type="evidence" value="ECO:0007669"/>
    <property type="project" value="TreeGrafter"/>
</dbReference>
<dbReference type="GO" id="GO:0004813">
    <property type="term" value="F:alanine-tRNA ligase activity"/>
    <property type="evidence" value="ECO:0007669"/>
    <property type="project" value="UniProtKB-UniRule"/>
</dbReference>
<dbReference type="GO" id="GO:0002161">
    <property type="term" value="F:aminoacyl-tRNA deacylase activity"/>
    <property type="evidence" value="ECO:0007669"/>
    <property type="project" value="TreeGrafter"/>
</dbReference>
<dbReference type="GO" id="GO:0005524">
    <property type="term" value="F:ATP binding"/>
    <property type="evidence" value="ECO:0007669"/>
    <property type="project" value="UniProtKB-UniRule"/>
</dbReference>
<dbReference type="GO" id="GO:0000049">
    <property type="term" value="F:tRNA binding"/>
    <property type="evidence" value="ECO:0007669"/>
    <property type="project" value="UniProtKB-KW"/>
</dbReference>
<dbReference type="GO" id="GO:0008270">
    <property type="term" value="F:zinc ion binding"/>
    <property type="evidence" value="ECO:0007669"/>
    <property type="project" value="UniProtKB-UniRule"/>
</dbReference>
<dbReference type="GO" id="GO:0006419">
    <property type="term" value="P:alanyl-tRNA aminoacylation"/>
    <property type="evidence" value="ECO:0007669"/>
    <property type="project" value="UniProtKB-UniRule"/>
</dbReference>
<dbReference type="GO" id="GO:0045892">
    <property type="term" value="P:negative regulation of DNA-templated transcription"/>
    <property type="evidence" value="ECO:0007669"/>
    <property type="project" value="TreeGrafter"/>
</dbReference>
<dbReference type="CDD" id="cd00673">
    <property type="entry name" value="AlaRS_core"/>
    <property type="match status" value="1"/>
</dbReference>
<dbReference type="FunFam" id="3.10.310.40:FF:000001">
    <property type="entry name" value="Alanine--tRNA ligase"/>
    <property type="match status" value="1"/>
</dbReference>
<dbReference type="FunFam" id="3.30.54.20:FF:000001">
    <property type="entry name" value="Alanine--tRNA ligase"/>
    <property type="match status" value="1"/>
</dbReference>
<dbReference type="FunFam" id="3.30.930.10:FF:000004">
    <property type="entry name" value="Alanine--tRNA ligase"/>
    <property type="match status" value="1"/>
</dbReference>
<dbReference type="FunFam" id="3.30.980.10:FF:000004">
    <property type="entry name" value="Alanine--tRNA ligase, cytoplasmic"/>
    <property type="match status" value="1"/>
</dbReference>
<dbReference type="Gene3D" id="2.40.30.130">
    <property type="match status" value="1"/>
</dbReference>
<dbReference type="Gene3D" id="3.10.310.40">
    <property type="match status" value="1"/>
</dbReference>
<dbReference type="Gene3D" id="3.30.54.20">
    <property type="match status" value="1"/>
</dbReference>
<dbReference type="Gene3D" id="3.30.930.10">
    <property type="entry name" value="Bira Bifunctional Protein, Domain 2"/>
    <property type="match status" value="1"/>
</dbReference>
<dbReference type="Gene3D" id="3.30.980.10">
    <property type="entry name" value="Threonyl-trna Synthetase, Chain A, domain 2"/>
    <property type="match status" value="1"/>
</dbReference>
<dbReference type="HAMAP" id="MF_00036_B">
    <property type="entry name" value="Ala_tRNA_synth_B"/>
    <property type="match status" value="1"/>
</dbReference>
<dbReference type="InterPro" id="IPR045864">
    <property type="entry name" value="aa-tRNA-synth_II/BPL/LPL"/>
</dbReference>
<dbReference type="InterPro" id="IPR002318">
    <property type="entry name" value="Ala-tRNA-lgiase_IIc"/>
</dbReference>
<dbReference type="InterPro" id="IPR018162">
    <property type="entry name" value="Ala-tRNA-ligase_IIc_anticod-bd"/>
</dbReference>
<dbReference type="InterPro" id="IPR018165">
    <property type="entry name" value="Ala-tRNA-synth_IIc_core"/>
</dbReference>
<dbReference type="InterPro" id="IPR018164">
    <property type="entry name" value="Ala-tRNA-synth_IIc_N"/>
</dbReference>
<dbReference type="InterPro" id="IPR050058">
    <property type="entry name" value="Ala-tRNA_ligase"/>
</dbReference>
<dbReference type="InterPro" id="IPR023033">
    <property type="entry name" value="Ala_tRNA_ligase_euk/bac"/>
</dbReference>
<dbReference type="InterPro" id="IPR003156">
    <property type="entry name" value="DHHA1_dom"/>
</dbReference>
<dbReference type="InterPro" id="IPR018163">
    <property type="entry name" value="Thr/Ala-tRNA-synth_IIc_edit"/>
</dbReference>
<dbReference type="InterPro" id="IPR009000">
    <property type="entry name" value="Transl_B-barrel_sf"/>
</dbReference>
<dbReference type="InterPro" id="IPR012947">
    <property type="entry name" value="tRNA_SAD"/>
</dbReference>
<dbReference type="NCBIfam" id="TIGR00344">
    <property type="entry name" value="alaS"/>
    <property type="match status" value="1"/>
</dbReference>
<dbReference type="PANTHER" id="PTHR11777:SF9">
    <property type="entry name" value="ALANINE--TRNA LIGASE, CYTOPLASMIC"/>
    <property type="match status" value="1"/>
</dbReference>
<dbReference type="PANTHER" id="PTHR11777">
    <property type="entry name" value="ALANYL-TRNA SYNTHETASE"/>
    <property type="match status" value="1"/>
</dbReference>
<dbReference type="Pfam" id="PF02272">
    <property type="entry name" value="DHHA1"/>
    <property type="match status" value="1"/>
</dbReference>
<dbReference type="Pfam" id="PF01411">
    <property type="entry name" value="tRNA-synt_2c"/>
    <property type="match status" value="1"/>
</dbReference>
<dbReference type="Pfam" id="PF07973">
    <property type="entry name" value="tRNA_SAD"/>
    <property type="match status" value="1"/>
</dbReference>
<dbReference type="PRINTS" id="PR00980">
    <property type="entry name" value="TRNASYNTHALA"/>
</dbReference>
<dbReference type="SMART" id="SM00863">
    <property type="entry name" value="tRNA_SAD"/>
    <property type="match status" value="1"/>
</dbReference>
<dbReference type="SUPFAM" id="SSF55681">
    <property type="entry name" value="Class II aaRS and biotin synthetases"/>
    <property type="match status" value="1"/>
</dbReference>
<dbReference type="SUPFAM" id="SSF101353">
    <property type="entry name" value="Putative anticodon-binding domain of alanyl-tRNA synthetase (AlaRS)"/>
    <property type="match status" value="1"/>
</dbReference>
<dbReference type="SUPFAM" id="SSF55186">
    <property type="entry name" value="ThrRS/AlaRS common domain"/>
    <property type="match status" value="1"/>
</dbReference>
<dbReference type="SUPFAM" id="SSF50447">
    <property type="entry name" value="Translation proteins"/>
    <property type="match status" value="1"/>
</dbReference>
<dbReference type="PROSITE" id="PS50860">
    <property type="entry name" value="AA_TRNA_LIGASE_II_ALA"/>
    <property type="match status" value="1"/>
</dbReference>
<reference key="1">
    <citation type="journal article" date="2006" name="PLoS Genet.">
        <title>Who ate whom? Adaptive Helicobacter genomic changes that accompanied a host jump from early humans to large felines.</title>
        <authorList>
            <person name="Eppinger M."/>
            <person name="Baar C."/>
            <person name="Linz B."/>
            <person name="Raddatz G."/>
            <person name="Lanz C."/>
            <person name="Keller H."/>
            <person name="Morelli G."/>
            <person name="Gressmann H."/>
            <person name="Achtman M."/>
            <person name="Schuster S.C."/>
        </authorList>
    </citation>
    <scope>NUCLEOTIDE SEQUENCE [LARGE SCALE GENOMIC DNA]</scope>
    <source>
        <strain>Sheeba</strain>
    </source>
</reference>
<gene>
    <name evidence="1" type="primary">alaS</name>
    <name type="ordered locus">Hac_0121</name>
</gene>
<protein>
    <recommendedName>
        <fullName evidence="1">Alanine--tRNA ligase</fullName>
        <ecNumber evidence="1">6.1.1.7</ecNumber>
    </recommendedName>
    <alternativeName>
        <fullName evidence="1">Alanyl-tRNA synthetase</fullName>
        <shortName evidence="1">AlaRS</shortName>
    </alternativeName>
</protein>
<evidence type="ECO:0000255" key="1">
    <source>
        <dbReference type="HAMAP-Rule" id="MF_00036"/>
    </source>
</evidence>
<comment type="function">
    <text evidence="1">Catalyzes the attachment of alanine to tRNA(Ala) in a two-step reaction: alanine is first activated by ATP to form Ala-AMP and then transferred to the acceptor end of tRNA(Ala). Also edits incorrectly charged Ser-tRNA(Ala) and Gly-tRNA(Ala) via its editing domain.</text>
</comment>
<comment type="catalytic activity">
    <reaction evidence="1">
        <text>tRNA(Ala) + L-alanine + ATP = L-alanyl-tRNA(Ala) + AMP + diphosphate</text>
        <dbReference type="Rhea" id="RHEA:12540"/>
        <dbReference type="Rhea" id="RHEA-COMP:9657"/>
        <dbReference type="Rhea" id="RHEA-COMP:9923"/>
        <dbReference type="ChEBI" id="CHEBI:30616"/>
        <dbReference type="ChEBI" id="CHEBI:33019"/>
        <dbReference type="ChEBI" id="CHEBI:57972"/>
        <dbReference type="ChEBI" id="CHEBI:78442"/>
        <dbReference type="ChEBI" id="CHEBI:78497"/>
        <dbReference type="ChEBI" id="CHEBI:456215"/>
        <dbReference type="EC" id="6.1.1.7"/>
    </reaction>
</comment>
<comment type="cofactor">
    <cofactor evidence="1">
        <name>Zn(2+)</name>
        <dbReference type="ChEBI" id="CHEBI:29105"/>
    </cofactor>
    <text evidence="1">Binds 1 zinc ion per subunit.</text>
</comment>
<comment type="subcellular location">
    <subcellularLocation>
        <location evidence="1">Cytoplasm</location>
    </subcellularLocation>
</comment>
<comment type="domain">
    <text evidence="1">Consists of three domains; the N-terminal catalytic domain, the editing domain and the C-terminal C-Ala domain. The editing domain removes incorrectly charged amino acids, while the C-Ala domain, along with tRNA(Ala), serves as a bridge to cooperatively bring together the editing and aminoacylation centers thus stimulating deacylation of misacylated tRNAs.</text>
</comment>
<comment type="similarity">
    <text evidence="1">Belongs to the class-II aminoacyl-tRNA synthetase family.</text>
</comment>
<organism>
    <name type="scientific">Helicobacter acinonychis (strain Sheeba)</name>
    <dbReference type="NCBI Taxonomy" id="382638"/>
    <lineage>
        <taxon>Bacteria</taxon>
        <taxon>Pseudomonadati</taxon>
        <taxon>Campylobacterota</taxon>
        <taxon>Epsilonproteobacteria</taxon>
        <taxon>Campylobacterales</taxon>
        <taxon>Helicobacteraceae</taxon>
        <taxon>Helicobacter</taxon>
    </lineage>
</organism>
<sequence length="847" mass="95225">MDIRNEFLQFFKNKGHEIYPSMPLVPNDSTLLFTNAGMVQFKDIFTGMVPHPSIPRATSSQLCMRAGGKHNDLENVGYTARHHTLFEMLGNFSFGDYFKEEAILFAWEFVTKNLGFKPKDLYISVHEKDDEAFKLWEKFVPTDKIKKMGDKDNFWQMGDSGPCGPCSEIYIDQGEKHFKGSEDYFGGEGDRFLEIWNLVFMQYERSNDGILSPLPKPSIDTGMGLERVQALLEHKLNNFDSSLFVPLMKEISELTSLDYASEFQPSFRVVADHARAVAFLLAQGVHFNKEGRGYVLRRILRRSLRHGYLMGLKEAFLYRVVGVVCEQFADTHAYLKESKEMVMKECFEEEKRFLETLESGMELFNLSLKHLNDNKIFDGKIAFKLYDTFGFPLDLTNDMLRNHGACVDMQGFESCMQEQVKRSKASWKGKRNNADFSTILNAYAPNVFVGYETTECFSQALGFFDSDFKEMTETNPNQEVWVLLEKTPFYAEGGGAIGDRGALLKDDEEAALVLDTKNFFGLNFSLLKIKKALKKGDQVIAQVSNERLEIAKHHSATHLLQSALREVLGSHVSQAGSLVESKRLRFDFSHSKALNDEELEKVEDLVNAQIFKHLSSQVEHMPLNQAKDKGALALFSEKYAENVRVVSFKEASIELCGGIHVENTGLIGGFRILKESGVSSGVRRIEAVCGKAFYQLAKEENKELKNARILLKNNDLIAGINKLKESVKNSQKASVPMDLPIETINGTSVVVGVVEQGDIKEMIDRLKNKHEKLLAMVFKQENERISLACGVKNAPIKAHVWANEVAQILGGKGGGRDDFASAGGKDIEKLQAALNAAKNTALKALEK</sequence>
<proteinExistence type="inferred from homology"/>
<feature type="chain" id="PRO_0000347631" description="Alanine--tRNA ligase">
    <location>
        <begin position="1"/>
        <end position="847"/>
    </location>
</feature>
<feature type="binding site" evidence="1">
    <location>
        <position position="554"/>
    </location>
    <ligand>
        <name>Zn(2+)</name>
        <dbReference type="ChEBI" id="CHEBI:29105"/>
    </ligand>
</feature>
<feature type="binding site" evidence="1">
    <location>
        <position position="558"/>
    </location>
    <ligand>
        <name>Zn(2+)</name>
        <dbReference type="ChEBI" id="CHEBI:29105"/>
    </ligand>
</feature>
<feature type="binding site" evidence="1">
    <location>
        <position position="656"/>
    </location>
    <ligand>
        <name>Zn(2+)</name>
        <dbReference type="ChEBI" id="CHEBI:29105"/>
    </ligand>
</feature>
<feature type="binding site" evidence="1">
    <location>
        <position position="660"/>
    </location>
    <ligand>
        <name>Zn(2+)</name>
        <dbReference type="ChEBI" id="CHEBI:29105"/>
    </ligand>
</feature>
<keyword id="KW-0030">Aminoacyl-tRNA synthetase</keyword>
<keyword id="KW-0067">ATP-binding</keyword>
<keyword id="KW-0963">Cytoplasm</keyword>
<keyword id="KW-0436">Ligase</keyword>
<keyword id="KW-0479">Metal-binding</keyword>
<keyword id="KW-0547">Nucleotide-binding</keyword>
<keyword id="KW-0648">Protein biosynthesis</keyword>
<keyword id="KW-0694">RNA-binding</keyword>
<keyword id="KW-0820">tRNA-binding</keyword>
<keyword id="KW-0862">Zinc</keyword>
<accession>Q17ZF3</accession>
<name>SYA_HELAH</name>